<proteinExistence type="inferred from homology"/>
<organism>
    <name type="scientific">Herminiimonas arsenicoxydans</name>
    <dbReference type="NCBI Taxonomy" id="204773"/>
    <lineage>
        <taxon>Bacteria</taxon>
        <taxon>Pseudomonadati</taxon>
        <taxon>Pseudomonadota</taxon>
        <taxon>Betaproteobacteria</taxon>
        <taxon>Burkholderiales</taxon>
        <taxon>Oxalobacteraceae</taxon>
        <taxon>Herminiimonas</taxon>
    </lineage>
</organism>
<evidence type="ECO:0000255" key="1">
    <source>
        <dbReference type="HAMAP-Rule" id="MF_01026"/>
    </source>
</evidence>
<reference key="1">
    <citation type="journal article" date="2007" name="PLoS Genet.">
        <title>A tale of two oxidation states: bacterial colonization of arsenic-rich environments.</title>
        <authorList>
            <person name="Muller D."/>
            <person name="Medigue C."/>
            <person name="Koechler S."/>
            <person name="Barbe V."/>
            <person name="Barakat M."/>
            <person name="Talla E."/>
            <person name="Bonnefoy V."/>
            <person name="Krin E."/>
            <person name="Arsene-Ploetze F."/>
            <person name="Carapito C."/>
            <person name="Chandler M."/>
            <person name="Cournoyer B."/>
            <person name="Cruveiller S."/>
            <person name="Dossat C."/>
            <person name="Duval S."/>
            <person name="Heymann M."/>
            <person name="Leize E."/>
            <person name="Lieutaud A."/>
            <person name="Lievremont D."/>
            <person name="Makita Y."/>
            <person name="Mangenot S."/>
            <person name="Nitschke W."/>
            <person name="Ortet P."/>
            <person name="Perdrial N."/>
            <person name="Schoepp B."/>
            <person name="Siguier P."/>
            <person name="Simeonova D.D."/>
            <person name="Rouy Z."/>
            <person name="Segurens B."/>
            <person name="Turlin E."/>
            <person name="Vallenet D."/>
            <person name="van Dorsselaer A."/>
            <person name="Weiss S."/>
            <person name="Weissenbach J."/>
            <person name="Lett M.-C."/>
            <person name="Danchin A."/>
            <person name="Bertin P.N."/>
        </authorList>
    </citation>
    <scope>NUCLEOTIDE SEQUENCE [LARGE SCALE GENOMIC DNA]</scope>
    <source>
        <strain>ULPAs1</strain>
    </source>
</reference>
<feature type="chain" id="PRO_1000063561" description="3-isopropylmalate dehydratase large subunit">
    <location>
        <begin position="1"/>
        <end position="466"/>
    </location>
</feature>
<feature type="binding site" evidence="1">
    <location>
        <position position="347"/>
    </location>
    <ligand>
        <name>[4Fe-4S] cluster</name>
        <dbReference type="ChEBI" id="CHEBI:49883"/>
    </ligand>
</feature>
<feature type="binding site" evidence="1">
    <location>
        <position position="408"/>
    </location>
    <ligand>
        <name>[4Fe-4S] cluster</name>
        <dbReference type="ChEBI" id="CHEBI:49883"/>
    </ligand>
</feature>
<feature type="binding site" evidence="1">
    <location>
        <position position="411"/>
    </location>
    <ligand>
        <name>[4Fe-4S] cluster</name>
        <dbReference type="ChEBI" id="CHEBI:49883"/>
    </ligand>
</feature>
<accession>A4G4F5</accession>
<dbReference type="EC" id="4.2.1.33" evidence="1"/>
<dbReference type="EMBL" id="CU207211">
    <property type="protein sequence ID" value="CAL61392.1"/>
    <property type="molecule type" value="Genomic_DNA"/>
</dbReference>
<dbReference type="SMR" id="A4G4F5"/>
<dbReference type="STRING" id="204773.HEAR1215"/>
<dbReference type="KEGG" id="har:HEAR1215"/>
<dbReference type="eggNOG" id="COG0065">
    <property type="taxonomic scope" value="Bacteria"/>
</dbReference>
<dbReference type="HOGENOM" id="CLU_006714_3_4_4"/>
<dbReference type="OrthoDB" id="9802769at2"/>
<dbReference type="UniPathway" id="UPA00048">
    <property type="reaction ID" value="UER00071"/>
</dbReference>
<dbReference type="Proteomes" id="UP000006697">
    <property type="component" value="Chromosome"/>
</dbReference>
<dbReference type="GO" id="GO:0003861">
    <property type="term" value="F:3-isopropylmalate dehydratase activity"/>
    <property type="evidence" value="ECO:0007669"/>
    <property type="project" value="UniProtKB-UniRule"/>
</dbReference>
<dbReference type="GO" id="GO:0051539">
    <property type="term" value="F:4 iron, 4 sulfur cluster binding"/>
    <property type="evidence" value="ECO:0007669"/>
    <property type="project" value="UniProtKB-KW"/>
</dbReference>
<dbReference type="GO" id="GO:0046872">
    <property type="term" value="F:metal ion binding"/>
    <property type="evidence" value="ECO:0007669"/>
    <property type="project" value="UniProtKB-KW"/>
</dbReference>
<dbReference type="GO" id="GO:0009098">
    <property type="term" value="P:L-leucine biosynthetic process"/>
    <property type="evidence" value="ECO:0007669"/>
    <property type="project" value="UniProtKB-UniRule"/>
</dbReference>
<dbReference type="CDD" id="cd01583">
    <property type="entry name" value="IPMI"/>
    <property type="match status" value="1"/>
</dbReference>
<dbReference type="FunFam" id="3.30.499.10:FF:000007">
    <property type="entry name" value="3-isopropylmalate dehydratase large subunit"/>
    <property type="match status" value="1"/>
</dbReference>
<dbReference type="Gene3D" id="3.30.499.10">
    <property type="entry name" value="Aconitase, domain 3"/>
    <property type="match status" value="2"/>
</dbReference>
<dbReference type="HAMAP" id="MF_01026">
    <property type="entry name" value="LeuC_type1"/>
    <property type="match status" value="1"/>
</dbReference>
<dbReference type="InterPro" id="IPR004430">
    <property type="entry name" value="3-IsopropMal_deHydase_lsu"/>
</dbReference>
<dbReference type="InterPro" id="IPR015931">
    <property type="entry name" value="Acnase/IPM_dHydase_lsu_aba_1/3"/>
</dbReference>
<dbReference type="InterPro" id="IPR001030">
    <property type="entry name" value="Acoase/IPM_deHydtase_lsu_aba"/>
</dbReference>
<dbReference type="InterPro" id="IPR018136">
    <property type="entry name" value="Aconitase_4Fe-4S_BS"/>
</dbReference>
<dbReference type="InterPro" id="IPR036008">
    <property type="entry name" value="Aconitase_4Fe-4S_dom"/>
</dbReference>
<dbReference type="InterPro" id="IPR050067">
    <property type="entry name" value="IPM_dehydratase_rel_enz"/>
</dbReference>
<dbReference type="InterPro" id="IPR033941">
    <property type="entry name" value="IPMI_cat"/>
</dbReference>
<dbReference type="NCBIfam" id="TIGR00170">
    <property type="entry name" value="leuC"/>
    <property type="match status" value="1"/>
</dbReference>
<dbReference type="NCBIfam" id="NF004016">
    <property type="entry name" value="PRK05478.1"/>
    <property type="match status" value="1"/>
</dbReference>
<dbReference type="NCBIfam" id="NF009116">
    <property type="entry name" value="PRK12466.1"/>
    <property type="match status" value="1"/>
</dbReference>
<dbReference type="PANTHER" id="PTHR43822:SF9">
    <property type="entry name" value="3-ISOPROPYLMALATE DEHYDRATASE"/>
    <property type="match status" value="1"/>
</dbReference>
<dbReference type="PANTHER" id="PTHR43822">
    <property type="entry name" value="HOMOACONITASE, MITOCHONDRIAL-RELATED"/>
    <property type="match status" value="1"/>
</dbReference>
<dbReference type="Pfam" id="PF00330">
    <property type="entry name" value="Aconitase"/>
    <property type="match status" value="1"/>
</dbReference>
<dbReference type="PRINTS" id="PR00415">
    <property type="entry name" value="ACONITASE"/>
</dbReference>
<dbReference type="SUPFAM" id="SSF53732">
    <property type="entry name" value="Aconitase iron-sulfur domain"/>
    <property type="match status" value="1"/>
</dbReference>
<dbReference type="PROSITE" id="PS00450">
    <property type="entry name" value="ACONITASE_1"/>
    <property type="match status" value="1"/>
</dbReference>
<dbReference type="PROSITE" id="PS01244">
    <property type="entry name" value="ACONITASE_2"/>
    <property type="match status" value="1"/>
</dbReference>
<sequence>MAQTLYDKLWQSHVVDTGDDGTTVLYIDRHLLHEVTSPQAFEGLKLAGRRPWRVSANLMVADHNVPTTDRSEGIADPTSRLQVETLDHNAHEYGLTYFSMRDKRQGIVHVIGPEQGATLPGMTVVCGDSHTSTHGAFGALAHGIGTSEVEHVLATQTLLAQKSKAMLVQVDGALPVGVTAKDIVLAIIGKIGTAGGTGYAIEFAGSTIRSLSMEGRMTICNMAIEAGARAGMVAVDETTINYVKGRPLSPVGPHWDRAVEYWRTLHSDVGAKFDLVVTLNAAEVKPQVSWGTSPEMVVSVDGRVPDPDKEKDATKRDGMEKALVYMGLKPNTPITDIRIDKVFIGSCTNSRIQDLRAAAAVVRGKHRASNVKLAMVVPGSGLVKEQAEREGLDKIFKDAGFEWREPGCSMCLAMNADRLEPGERCASTSNRNFEGRQGAGGRTHLVSPAMAAAAGIEGHFVDVRAL</sequence>
<protein>
    <recommendedName>
        <fullName evidence="1">3-isopropylmalate dehydratase large subunit</fullName>
        <ecNumber evidence="1">4.2.1.33</ecNumber>
    </recommendedName>
    <alternativeName>
        <fullName evidence="1">Alpha-IPM isomerase</fullName>
        <shortName evidence="1">IPMI</shortName>
    </alternativeName>
    <alternativeName>
        <fullName evidence="1">Isopropylmalate isomerase</fullName>
    </alternativeName>
</protein>
<keyword id="KW-0004">4Fe-4S</keyword>
<keyword id="KW-0028">Amino-acid biosynthesis</keyword>
<keyword id="KW-0100">Branched-chain amino acid biosynthesis</keyword>
<keyword id="KW-0408">Iron</keyword>
<keyword id="KW-0411">Iron-sulfur</keyword>
<keyword id="KW-0432">Leucine biosynthesis</keyword>
<keyword id="KW-0456">Lyase</keyword>
<keyword id="KW-0479">Metal-binding</keyword>
<keyword id="KW-1185">Reference proteome</keyword>
<name>LEUC_HERAR</name>
<comment type="function">
    <text evidence="1">Catalyzes the isomerization between 2-isopropylmalate and 3-isopropylmalate, via the formation of 2-isopropylmaleate.</text>
</comment>
<comment type="catalytic activity">
    <reaction evidence="1">
        <text>(2R,3S)-3-isopropylmalate = (2S)-2-isopropylmalate</text>
        <dbReference type="Rhea" id="RHEA:32287"/>
        <dbReference type="ChEBI" id="CHEBI:1178"/>
        <dbReference type="ChEBI" id="CHEBI:35121"/>
        <dbReference type="EC" id="4.2.1.33"/>
    </reaction>
</comment>
<comment type="cofactor">
    <cofactor evidence="1">
        <name>[4Fe-4S] cluster</name>
        <dbReference type="ChEBI" id="CHEBI:49883"/>
    </cofactor>
    <text evidence="1">Binds 1 [4Fe-4S] cluster per subunit.</text>
</comment>
<comment type="pathway">
    <text evidence="1">Amino-acid biosynthesis; L-leucine biosynthesis; L-leucine from 3-methyl-2-oxobutanoate: step 2/4.</text>
</comment>
<comment type="subunit">
    <text evidence="1">Heterodimer of LeuC and LeuD.</text>
</comment>
<comment type="similarity">
    <text evidence="1">Belongs to the aconitase/IPM isomerase family. LeuC type 1 subfamily.</text>
</comment>
<gene>
    <name evidence="1" type="primary">leuC</name>
    <name type="ordered locus">HEAR1215</name>
</gene>